<organism>
    <name type="scientific">Pseudomonas aeruginosa (strain LESB58)</name>
    <dbReference type="NCBI Taxonomy" id="557722"/>
    <lineage>
        <taxon>Bacteria</taxon>
        <taxon>Pseudomonadati</taxon>
        <taxon>Pseudomonadota</taxon>
        <taxon>Gammaproteobacteria</taxon>
        <taxon>Pseudomonadales</taxon>
        <taxon>Pseudomonadaceae</taxon>
        <taxon>Pseudomonas</taxon>
    </lineage>
</organism>
<keyword id="KW-0028">Amino-acid biosynthesis</keyword>
<keyword id="KW-0963">Cytoplasm</keyword>
<keyword id="KW-0413">Isomerase</keyword>
<keyword id="KW-0457">Lysine biosynthesis</keyword>
<evidence type="ECO:0000255" key="1">
    <source>
        <dbReference type="HAMAP-Rule" id="MF_00197"/>
    </source>
</evidence>
<reference key="1">
    <citation type="journal article" date="2009" name="Genome Res.">
        <title>Newly introduced genomic prophage islands are critical determinants of in vivo competitiveness in the Liverpool epidemic strain of Pseudomonas aeruginosa.</title>
        <authorList>
            <person name="Winstanley C."/>
            <person name="Langille M.G.I."/>
            <person name="Fothergill J.L."/>
            <person name="Kukavica-Ibrulj I."/>
            <person name="Paradis-Bleau C."/>
            <person name="Sanschagrin F."/>
            <person name="Thomson N.R."/>
            <person name="Winsor G.L."/>
            <person name="Quail M.A."/>
            <person name="Lennard N."/>
            <person name="Bignell A."/>
            <person name="Clarke L."/>
            <person name="Seeger K."/>
            <person name="Saunders D."/>
            <person name="Harris D."/>
            <person name="Parkhill J."/>
            <person name="Hancock R.E.W."/>
            <person name="Brinkman F.S.L."/>
            <person name="Levesque R.C."/>
        </authorList>
    </citation>
    <scope>NUCLEOTIDE SEQUENCE [LARGE SCALE GENOMIC DNA]</scope>
    <source>
        <strain>LESB58</strain>
    </source>
</reference>
<proteinExistence type="inferred from homology"/>
<comment type="function">
    <text evidence="1">Catalyzes the stereoinversion of LL-2,6-diaminopimelate (L,L-DAP) to meso-diaminopimelate (meso-DAP), a precursor of L-lysine and an essential component of the bacterial peptidoglycan.</text>
</comment>
<comment type="catalytic activity">
    <reaction evidence="1">
        <text>(2S,6S)-2,6-diaminopimelate = meso-2,6-diaminopimelate</text>
        <dbReference type="Rhea" id="RHEA:15393"/>
        <dbReference type="ChEBI" id="CHEBI:57609"/>
        <dbReference type="ChEBI" id="CHEBI:57791"/>
        <dbReference type="EC" id="5.1.1.7"/>
    </reaction>
</comment>
<comment type="pathway">
    <text evidence="1">Amino-acid biosynthesis; L-lysine biosynthesis via DAP pathway; DL-2,6-diaminopimelate from LL-2,6-diaminopimelate: step 1/1.</text>
</comment>
<comment type="subunit">
    <text evidence="1">Homodimer.</text>
</comment>
<comment type="subcellular location">
    <subcellularLocation>
        <location evidence="1">Cytoplasm</location>
    </subcellularLocation>
</comment>
<comment type="similarity">
    <text evidence="1">Belongs to the diaminopimelate epimerase family.</text>
</comment>
<accession>B7V5G9</accession>
<dbReference type="EC" id="5.1.1.7" evidence="1"/>
<dbReference type="EMBL" id="FM209186">
    <property type="protein sequence ID" value="CAW30427.1"/>
    <property type="molecule type" value="Genomic_DNA"/>
</dbReference>
<dbReference type="RefSeq" id="WP_003114344.1">
    <property type="nucleotide sequence ID" value="NC_011770.1"/>
</dbReference>
<dbReference type="SMR" id="B7V5G9"/>
<dbReference type="KEGG" id="pag:PLES_56731"/>
<dbReference type="HOGENOM" id="CLU_053306_1_1_6"/>
<dbReference type="UniPathway" id="UPA00034">
    <property type="reaction ID" value="UER00025"/>
</dbReference>
<dbReference type="GO" id="GO:0005829">
    <property type="term" value="C:cytosol"/>
    <property type="evidence" value="ECO:0007669"/>
    <property type="project" value="TreeGrafter"/>
</dbReference>
<dbReference type="GO" id="GO:0008837">
    <property type="term" value="F:diaminopimelate epimerase activity"/>
    <property type="evidence" value="ECO:0007669"/>
    <property type="project" value="UniProtKB-UniRule"/>
</dbReference>
<dbReference type="GO" id="GO:0009089">
    <property type="term" value="P:lysine biosynthetic process via diaminopimelate"/>
    <property type="evidence" value="ECO:0007669"/>
    <property type="project" value="UniProtKB-UniRule"/>
</dbReference>
<dbReference type="FunFam" id="3.10.310.10:FF:000001">
    <property type="entry name" value="Diaminopimelate epimerase"/>
    <property type="match status" value="1"/>
</dbReference>
<dbReference type="FunFam" id="3.10.310.10:FF:000002">
    <property type="entry name" value="Diaminopimelate epimerase"/>
    <property type="match status" value="1"/>
</dbReference>
<dbReference type="Gene3D" id="3.10.310.10">
    <property type="entry name" value="Diaminopimelate Epimerase, Chain A, domain 1"/>
    <property type="match status" value="2"/>
</dbReference>
<dbReference type="HAMAP" id="MF_00197">
    <property type="entry name" value="DAP_epimerase"/>
    <property type="match status" value="1"/>
</dbReference>
<dbReference type="InterPro" id="IPR018510">
    <property type="entry name" value="DAP_epimerase_AS"/>
</dbReference>
<dbReference type="InterPro" id="IPR001653">
    <property type="entry name" value="DAP_epimerase_DapF"/>
</dbReference>
<dbReference type="NCBIfam" id="TIGR00652">
    <property type="entry name" value="DapF"/>
    <property type="match status" value="1"/>
</dbReference>
<dbReference type="PANTHER" id="PTHR31689:SF0">
    <property type="entry name" value="DIAMINOPIMELATE EPIMERASE"/>
    <property type="match status" value="1"/>
</dbReference>
<dbReference type="PANTHER" id="PTHR31689">
    <property type="entry name" value="DIAMINOPIMELATE EPIMERASE, CHLOROPLASTIC"/>
    <property type="match status" value="1"/>
</dbReference>
<dbReference type="Pfam" id="PF01678">
    <property type="entry name" value="DAP_epimerase"/>
    <property type="match status" value="2"/>
</dbReference>
<dbReference type="SUPFAM" id="SSF54506">
    <property type="entry name" value="Diaminopimelate epimerase-like"/>
    <property type="match status" value="1"/>
</dbReference>
<dbReference type="PROSITE" id="PS01326">
    <property type="entry name" value="DAP_EPIMERASE"/>
    <property type="match status" value="1"/>
</dbReference>
<name>DAPF_PSEA8</name>
<gene>
    <name evidence="1" type="primary">dapF</name>
    <name type="ordered locus">PLES_56731</name>
</gene>
<feature type="chain" id="PRO_1000118674" description="Diaminopimelate epimerase">
    <location>
        <begin position="1"/>
        <end position="276"/>
    </location>
</feature>
<feature type="active site" description="Proton donor" evidence="1">
    <location>
        <position position="75"/>
    </location>
</feature>
<feature type="active site" description="Proton acceptor" evidence="1">
    <location>
        <position position="219"/>
    </location>
</feature>
<feature type="binding site" evidence="1">
    <location>
        <position position="13"/>
    </location>
    <ligand>
        <name>substrate</name>
    </ligand>
</feature>
<feature type="binding site" evidence="1">
    <location>
        <position position="46"/>
    </location>
    <ligand>
        <name>substrate</name>
    </ligand>
</feature>
<feature type="binding site" evidence="1">
    <location>
        <position position="66"/>
    </location>
    <ligand>
        <name>substrate</name>
    </ligand>
</feature>
<feature type="binding site" evidence="1">
    <location>
        <begin position="76"/>
        <end position="77"/>
    </location>
    <ligand>
        <name>substrate</name>
    </ligand>
</feature>
<feature type="binding site" evidence="1">
    <location>
        <position position="159"/>
    </location>
    <ligand>
        <name>substrate</name>
    </ligand>
</feature>
<feature type="binding site" evidence="1">
    <location>
        <position position="192"/>
    </location>
    <ligand>
        <name>substrate</name>
    </ligand>
</feature>
<feature type="binding site" evidence="1">
    <location>
        <begin position="210"/>
        <end position="211"/>
    </location>
    <ligand>
        <name>substrate</name>
    </ligand>
</feature>
<feature type="binding site" evidence="1">
    <location>
        <begin position="220"/>
        <end position="221"/>
    </location>
    <ligand>
        <name>substrate</name>
    </ligand>
</feature>
<feature type="site" description="Could be important to modulate the pK values of the two catalytic cysteine residues" evidence="1">
    <location>
        <position position="161"/>
    </location>
</feature>
<feature type="site" description="Could be important to modulate the pK values of the two catalytic cysteine residues" evidence="1">
    <location>
        <position position="210"/>
    </location>
</feature>
<feature type="site" description="Important for dimerization" evidence="1">
    <location>
        <position position="270"/>
    </location>
</feature>
<sequence>MLLRFTKMHGLGNDFMVLDLVSQHAHVQPKHVKLWGDRNTGIGFDQLLIVEAPSSPDVDFRYRIFNADGSEVEQCGNGARCFARFVQDKRLTVKKSIRVETKGGIIELNIRPDGQVTVDMGPPRLAPAEIPFQAEREALSYEIEVNGQRVELAAVSMGNPHGVLRVENVDSAPVHSLGPQLEVHPRFPKKANIGFLQVLDPHHARLRVWERGVGETQACGTGACAAAVAGIRQGWLQSPVQIDLPGGRLHIEWAGPGQPVMMTGPAVRVYEGQVRL</sequence>
<protein>
    <recommendedName>
        <fullName evidence="1">Diaminopimelate epimerase</fullName>
        <shortName evidence="1">DAP epimerase</shortName>
        <ecNumber evidence="1">5.1.1.7</ecNumber>
    </recommendedName>
    <alternativeName>
        <fullName evidence="1">PLP-independent amino acid racemase</fullName>
    </alternativeName>
</protein>